<comment type="function">
    <text evidence="1">Endo-1,4-beta-xylanase involved in the hydrolysis of xylan, a major structural heterogeneous polysaccharide found in plant biomass representing the second most abundant polysaccharide in the biosphere, after cellulose.</text>
</comment>
<comment type="catalytic activity">
    <reaction>
        <text>Endohydrolysis of (1-&gt;4)-beta-D-xylosidic linkages in xylans.</text>
        <dbReference type="EC" id="3.2.1.8"/>
    </reaction>
</comment>
<comment type="pathway">
    <text>Glycan degradation; xylan degradation.</text>
</comment>
<comment type="subcellular location">
    <subcellularLocation>
        <location evidence="1">Secreted</location>
    </subcellularLocation>
</comment>
<comment type="similarity">
    <text evidence="6">Belongs to the glycosyl hydrolase 11 (cellulase G) family.</text>
</comment>
<accession>Q0CFS3</accession>
<keyword id="KW-0119">Carbohydrate metabolism</keyword>
<keyword id="KW-0325">Glycoprotein</keyword>
<keyword id="KW-0326">Glycosidase</keyword>
<keyword id="KW-0378">Hydrolase</keyword>
<keyword id="KW-0624">Polysaccharide degradation</keyword>
<keyword id="KW-1185">Reference proteome</keyword>
<keyword id="KW-0964">Secreted</keyword>
<keyword id="KW-0732">Signal</keyword>
<keyword id="KW-0858">Xylan degradation</keyword>
<sequence length="231" mass="24752">MVSFLRLAVACFAAVGALAAPVESLEERSDELFNSTLHEFAERSTPSSTGWSNGYYYSFWTDGGGSVTYTNGAAGQYSVQWSNVGNFVGGKGWNPGSARTINYGGSFNPSGNGYLAVYGWTTNPLVEYYVVESYGTYNPGSGGTYKGTVNSDGGTYNIYTATRYNAPSIIGTATFTQYWSVRTSKRTGGTVTMANHFNAWASHGMNLGTHNYQIVATEGYQSSGSSSITVY</sequence>
<feature type="signal peptide" evidence="2">
    <location>
        <begin position="1"/>
        <end position="19"/>
    </location>
</feature>
<feature type="chain" id="PRO_0000393163" description="Probable endo-1,4-beta-xylanase A">
    <location>
        <begin position="20"/>
        <end position="231"/>
    </location>
</feature>
<feature type="domain" description="GH11" evidence="3">
    <location>
        <begin position="43"/>
        <end position="231"/>
    </location>
</feature>
<feature type="active site" description="Nucleophile" evidence="4">
    <location>
        <position position="127"/>
    </location>
</feature>
<feature type="active site" description="Proton donor" evidence="5">
    <location>
        <position position="218"/>
    </location>
</feature>
<feature type="glycosylation site" description="N-linked (GlcNAc...) asparagine" evidence="2">
    <location>
        <position position="34"/>
    </location>
</feature>
<organism>
    <name type="scientific">Aspergillus terreus (strain NIH 2624 / FGSC A1156)</name>
    <dbReference type="NCBI Taxonomy" id="341663"/>
    <lineage>
        <taxon>Eukaryota</taxon>
        <taxon>Fungi</taxon>
        <taxon>Dikarya</taxon>
        <taxon>Ascomycota</taxon>
        <taxon>Pezizomycotina</taxon>
        <taxon>Eurotiomycetes</taxon>
        <taxon>Eurotiomycetidae</taxon>
        <taxon>Eurotiales</taxon>
        <taxon>Aspergillaceae</taxon>
        <taxon>Aspergillus</taxon>
        <taxon>Aspergillus subgen. Circumdati</taxon>
    </lineage>
</organism>
<proteinExistence type="inferred from homology"/>
<protein>
    <recommendedName>
        <fullName>Probable endo-1,4-beta-xylanase A</fullName>
        <shortName>Xylanase A</shortName>
        <ecNumber>3.2.1.8</ecNumber>
    </recommendedName>
    <alternativeName>
        <fullName>1,4-beta-D-xylan xylanohydrolase A</fullName>
    </alternativeName>
</protein>
<reference key="1">
    <citation type="submission" date="2005-09" db="EMBL/GenBank/DDBJ databases">
        <title>Annotation of the Aspergillus terreus NIH2624 genome.</title>
        <authorList>
            <person name="Birren B.W."/>
            <person name="Lander E.S."/>
            <person name="Galagan J.E."/>
            <person name="Nusbaum C."/>
            <person name="Devon K."/>
            <person name="Henn M."/>
            <person name="Ma L.-J."/>
            <person name="Jaffe D.B."/>
            <person name="Butler J."/>
            <person name="Alvarez P."/>
            <person name="Gnerre S."/>
            <person name="Grabherr M."/>
            <person name="Kleber M."/>
            <person name="Mauceli E.W."/>
            <person name="Brockman W."/>
            <person name="Rounsley S."/>
            <person name="Young S.K."/>
            <person name="LaButti K."/>
            <person name="Pushparaj V."/>
            <person name="DeCaprio D."/>
            <person name="Crawford M."/>
            <person name="Koehrsen M."/>
            <person name="Engels R."/>
            <person name="Montgomery P."/>
            <person name="Pearson M."/>
            <person name="Howarth C."/>
            <person name="Larson L."/>
            <person name="Luoma S."/>
            <person name="White J."/>
            <person name="Alvarado L."/>
            <person name="Kodira C.D."/>
            <person name="Zeng Q."/>
            <person name="Oleary S."/>
            <person name="Yandava C."/>
            <person name="Denning D.W."/>
            <person name="Nierman W.C."/>
            <person name="Milne T."/>
            <person name="Madden K."/>
        </authorList>
    </citation>
    <scope>NUCLEOTIDE SEQUENCE [LARGE SCALE GENOMIC DNA]</scope>
    <source>
        <strain>NIH 2624 / FGSC A1156</strain>
    </source>
</reference>
<evidence type="ECO:0000250" key="1"/>
<evidence type="ECO:0000255" key="2"/>
<evidence type="ECO:0000255" key="3">
    <source>
        <dbReference type="PROSITE-ProRule" id="PRU01097"/>
    </source>
</evidence>
<evidence type="ECO:0000255" key="4">
    <source>
        <dbReference type="PROSITE-ProRule" id="PRU10062"/>
    </source>
</evidence>
<evidence type="ECO:0000255" key="5">
    <source>
        <dbReference type="PROSITE-ProRule" id="PRU10063"/>
    </source>
</evidence>
<evidence type="ECO:0000305" key="6"/>
<dbReference type="EC" id="3.2.1.8"/>
<dbReference type="EMBL" id="CH476604">
    <property type="protein sequence ID" value="EAU31723.1"/>
    <property type="molecule type" value="Genomic_DNA"/>
</dbReference>
<dbReference type="RefSeq" id="XP_001216082.1">
    <property type="nucleotide sequence ID" value="XM_001216082.1"/>
</dbReference>
<dbReference type="SMR" id="Q0CFS3"/>
<dbReference type="STRING" id="341663.Q0CFS3"/>
<dbReference type="GlyCosmos" id="Q0CFS3">
    <property type="glycosylation" value="1 site, No reported glycans"/>
</dbReference>
<dbReference type="EnsemblFungi" id="EAU31723">
    <property type="protein sequence ID" value="EAU31723"/>
    <property type="gene ID" value="ATEG_07461"/>
</dbReference>
<dbReference type="GeneID" id="4322746"/>
<dbReference type="VEuPathDB" id="FungiDB:ATEG_07461"/>
<dbReference type="eggNOG" id="ENOG502RXA7">
    <property type="taxonomic scope" value="Eukaryota"/>
</dbReference>
<dbReference type="HOGENOM" id="CLU_052631_0_0_1"/>
<dbReference type="OMA" id="NMQNHFN"/>
<dbReference type="OrthoDB" id="2115822at2759"/>
<dbReference type="UniPathway" id="UPA00114"/>
<dbReference type="Proteomes" id="UP000007963">
    <property type="component" value="Unassembled WGS sequence"/>
</dbReference>
<dbReference type="GO" id="GO:0005576">
    <property type="term" value="C:extracellular region"/>
    <property type="evidence" value="ECO:0007669"/>
    <property type="project" value="UniProtKB-SubCell"/>
</dbReference>
<dbReference type="GO" id="GO:0031176">
    <property type="term" value="F:endo-1,4-beta-xylanase activity"/>
    <property type="evidence" value="ECO:0000250"/>
    <property type="project" value="UniProtKB"/>
</dbReference>
<dbReference type="GO" id="GO:0045493">
    <property type="term" value="P:xylan catabolic process"/>
    <property type="evidence" value="ECO:0000250"/>
    <property type="project" value="UniProtKB"/>
</dbReference>
<dbReference type="FunFam" id="2.60.120.180:FF:000001">
    <property type="entry name" value="Endo-1,4-beta-xylanase"/>
    <property type="match status" value="1"/>
</dbReference>
<dbReference type="Gene3D" id="2.60.120.180">
    <property type="match status" value="1"/>
</dbReference>
<dbReference type="InterPro" id="IPR013320">
    <property type="entry name" value="ConA-like_dom_sf"/>
</dbReference>
<dbReference type="InterPro" id="IPR013319">
    <property type="entry name" value="GH11/12"/>
</dbReference>
<dbReference type="InterPro" id="IPR018208">
    <property type="entry name" value="GH11_AS_1"/>
</dbReference>
<dbReference type="InterPro" id="IPR033119">
    <property type="entry name" value="GH11_AS_2"/>
</dbReference>
<dbReference type="InterPro" id="IPR033123">
    <property type="entry name" value="GH11_dom"/>
</dbReference>
<dbReference type="InterPro" id="IPR001137">
    <property type="entry name" value="Glyco_hydro_11"/>
</dbReference>
<dbReference type="PANTHER" id="PTHR46828">
    <property type="entry name" value="ENDO-1,4-BETA-XYLANASE A-RELATED"/>
    <property type="match status" value="1"/>
</dbReference>
<dbReference type="PANTHER" id="PTHR46828:SF2">
    <property type="entry name" value="ENDO-1,4-BETA-XYLANASE A-RELATED"/>
    <property type="match status" value="1"/>
</dbReference>
<dbReference type="Pfam" id="PF00457">
    <property type="entry name" value="Glyco_hydro_11"/>
    <property type="match status" value="1"/>
</dbReference>
<dbReference type="PRINTS" id="PR00911">
    <property type="entry name" value="GLHYDRLASE11"/>
</dbReference>
<dbReference type="SUPFAM" id="SSF49899">
    <property type="entry name" value="Concanavalin A-like lectins/glucanases"/>
    <property type="match status" value="1"/>
</dbReference>
<dbReference type="PROSITE" id="PS00776">
    <property type="entry name" value="GH11_1"/>
    <property type="match status" value="1"/>
</dbReference>
<dbReference type="PROSITE" id="PS00777">
    <property type="entry name" value="GH11_2"/>
    <property type="match status" value="1"/>
</dbReference>
<dbReference type="PROSITE" id="PS51761">
    <property type="entry name" value="GH11_3"/>
    <property type="match status" value="1"/>
</dbReference>
<name>XYNA_ASPTN</name>
<gene>
    <name type="primary">xlnA</name>
    <name type="ORF">ATEG_07461</name>
</gene>